<comment type="function">
    <text evidence="2">Catalyzes two activities which are involved in the cyclic version of arginine biosynthesis: the synthesis of N-acetylglutamate from glutamate and acetyl-CoA as the acetyl donor, and of ornithine by transacetylation between N(2)-acetylornithine and glutamate.</text>
</comment>
<comment type="catalytic activity">
    <reaction evidence="2">
        <text>N(2)-acetyl-L-ornithine + L-glutamate = N-acetyl-L-glutamate + L-ornithine</text>
        <dbReference type="Rhea" id="RHEA:15349"/>
        <dbReference type="ChEBI" id="CHEBI:29985"/>
        <dbReference type="ChEBI" id="CHEBI:44337"/>
        <dbReference type="ChEBI" id="CHEBI:46911"/>
        <dbReference type="ChEBI" id="CHEBI:57805"/>
        <dbReference type="EC" id="2.3.1.35"/>
    </reaction>
</comment>
<comment type="catalytic activity">
    <reaction evidence="2">
        <text>L-glutamate + acetyl-CoA = N-acetyl-L-glutamate + CoA + H(+)</text>
        <dbReference type="Rhea" id="RHEA:24292"/>
        <dbReference type="ChEBI" id="CHEBI:15378"/>
        <dbReference type="ChEBI" id="CHEBI:29985"/>
        <dbReference type="ChEBI" id="CHEBI:44337"/>
        <dbReference type="ChEBI" id="CHEBI:57287"/>
        <dbReference type="ChEBI" id="CHEBI:57288"/>
        <dbReference type="EC" id="2.3.1.1"/>
    </reaction>
</comment>
<comment type="activity regulation">
    <text evidence="2">Competitively inhibited by L-ornithine.</text>
</comment>
<comment type="biophysicochemical properties">
    <kinetics>
        <KM evidence="2">2.4 mM for acetyl-CoA (AGSase activity)</KM>
        <KM evidence="2">8.1 mM for N-acetyl-L-ornithine (OATase activity)</KM>
        <KM evidence="2">27.9 mM for L-glutamate (OATase activity)</KM>
        <Vmax evidence="2">7.7 mmol/min/mg enzyme (AGSase activity)</Vmax>
        <Vmax evidence="2">290.0 mmol/min/mg enzyme (OATase activity)</Vmax>
    </kinetics>
    <phDependence>
        <text evidence="2">Optimum pH is 8 for OATase activity and 7.5-8 for AGSase activity.</text>
    </phDependence>
    <temperatureDependence>
        <text evidence="2">Optimum temperature is 90 degrees Celsius (OATase activity).</text>
    </temperatureDependence>
</comment>
<comment type="pathway">
    <text evidence="1">Amino-acid biosynthesis; L-arginine biosynthesis; L-ornithine and N-acetyl-L-glutamate from L-glutamate and N(2)-acetyl-L-ornithine (cyclic): step 1/1.</text>
</comment>
<comment type="pathway">
    <text evidence="1">Amino-acid biosynthesis; L-arginine biosynthesis; N(2)-acetyl-L-ornithine from L-glutamate: step 1/4.</text>
</comment>
<comment type="subunit">
    <text evidence="1 2">Heterotetramer of two alpha and two beta chains.</text>
</comment>
<comment type="subcellular location">
    <subcellularLocation>
        <location evidence="1 4">Cytoplasm</location>
    </subcellularLocation>
</comment>
<comment type="similarity">
    <text evidence="1 4">Belongs to the ArgJ family.</text>
</comment>
<proteinExistence type="evidence at protein level"/>
<accession>Q9Z4S1</accession>
<accession>B9K8S4</accession>
<keyword id="KW-0012">Acyltransferase</keyword>
<keyword id="KW-0028">Amino-acid biosynthesis</keyword>
<keyword id="KW-0055">Arginine biosynthesis</keyword>
<keyword id="KW-0068">Autocatalytic cleavage</keyword>
<keyword id="KW-0963">Cytoplasm</keyword>
<keyword id="KW-0903">Direct protein sequencing</keyword>
<keyword id="KW-0511">Multifunctional enzyme</keyword>
<keyword id="KW-0808">Transferase</keyword>
<gene>
    <name evidence="1" type="primary">argJ</name>
    <name type="ordered locus">CTN_1181</name>
</gene>
<dbReference type="EC" id="2.3.1.35" evidence="1 2"/>
<dbReference type="EC" id="2.3.1.1" evidence="1 2"/>
<dbReference type="EMBL" id="AJ009897">
    <property type="protein sequence ID" value="CAB38110.1"/>
    <property type="molecule type" value="Genomic_DNA"/>
</dbReference>
<dbReference type="EMBL" id="CP000916">
    <property type="protein sequence ID" value="ACM23357.1"/>
    <property type="molecule type" value="Genomic_DNA"/>
</dbReference>
<dbReference type="RefSeq" id="WP_015919672.1">
    <property type="nucleotide sequence ID" value="NC_011978.1"/>
</dbReference>
<dbReference type="SMR" id="Q9Z4S1"/>
<dbReference type="STRING" id="309803.CTN_1181"/>
<dbReference type="MEROPS" id="T05.002"/>
<dbReference type="KEGG" id="tna:CTN_1181"/>
<dbReference type="eggNOG" id="COG1364">
    <property type="taxonomic scope" value="Bacteria"/>
</dbReference>
<dbReference type="HOGENOM" id="CLU_027172_1_0_0"/>
<dbReference type="SABIO-RK" id="Q9Z4S1"/>
<dbReference type="UniPathway" id="UPA00068">
    <property type="reaction ID" value="UER00106"/>
</dbReference>
<dbReference type="UniPathway" id="UPA00068">
    <property type="reaction ID" value="UER00111"/>
</dbReference>
<dbReference type="Proteomes" id="UP000000445">
    <property type="component" value="Chromosome"/>
</dbReference>
<dbReference type="GO" id="GO:0005737">
    <property type="term" value="C:cytoplasm"/>
    <property type="evidence" value="ECO:0007669"/>
    <property type="project" value="UniProtKB-SubCell"/>
</dbReference>
<dbReference type="GO" id="GO:0004358">
    <property type="term" value="F:glutamate N-acetyltransferase activity"/>
    <property type="evidence" value="ECO:0007669"/>
    <property type="project" value="UniProtKB-UniRule"/>
</dbReference>
<dbReference type="GO" id="GO:0004042">
    <property type="term" value="F:L-glutamate N-acetyltransferase activity"/>
    <property type="evidence" value="ECO:0007669"/>
    <property type="project" value="UniProtKB-UniRule"/>
</dbReference>
<dbReference type="GO" id="GO:0006526">
    <property type="term" value="P:L-arginine biosynthetic process"/>
    <property type="evidence" value="ECO:0007669"/>
    <property type="project" value="UniProtKB-UniRule"/>
</dbReference>
<dbReference type="GO" id="GO:0006592">
    <property type="term" value="P:ornithine biosynthetic process"/>
    <property type="evidence" value="ECO:0007669"/>
    <property type="project" value="TreeGrafter"/>
</dbReference>
<dbReference type="CDD" id="cd02152">
    <property type="entry name" value="OAT"/>
    <property type="match status" value="1"/>
</dbReference>
<dbReference type="FunFam" id="3.10.20.340:FF:000001">
    <property type="entry name" value="Arginine biosynthesis bifunctional protein ArgJ, chloroplastic"/>
    <property type="match status" value="1"/>
</dbReference>
<dbReference type="FunFam" id="3.60.70.12:FF:000001">
    <property type="entry name" value="Arginine biosynthesis bifunctional protein ArgJ, chloroplastic"/>
    <property type="match status" value="1"/>
</dbReference>
<dbReference type="FunFam" id="3.30.2330.10:FF:000001">
    <property type="entry name" value="Arginine biosynthesis bifunctional protein ArgJ, mitochondrial"/>
    <property type="match status" value="1"/>
</dbReference>
<dbReference type="Gene3D" id="3.30.2330.10">
    <property type="entry name" value="arginine biosynthesis bifunctional protein suprefamily"/>
    <property type="match status" value="1"/>
</dbReference>
<dbReference type="Gene3D" id="3.10.20.340">
    <property type="entry name" value="ArgJ beta chain, C-terminal domain"/>
    <property type="match status" value="1"/>
</dbReference>
<dbReference type="Gene3D" id="3.60.70.12">
    <property type="entry name" value="L-amino peptidase D-ALA esterase/amidase"/>
    <property type="match status" value="1"/>
</dbReference>
<dbReference type="HAMAP" id="MF_01106">
    <property type="entry name" value="ArgJ"/>
    <property type="match status" value="1"/>
</dbReference>
<dbReference type="InterPro" id="IPR002813">
    <property type="entry name" value="Arg_biosynth_ArgJ"/>
</dbReference>
<dbReference type="InterPro" id="IPR016117">
    <property type="entry name" value="ArgJ-like_dom_sf"/>
</dbReference>
<dbReference type="InterPro" id="IPR042195">
    <property type="entry name" value="ArgJ_beta_C"/>
</dbReference>
<dbReference type="NCBIfam" id="TIGR00120">
    <property type="entry name" value="ArgJ"/>
    <property type="match status" value="1"/>
</dbReference>
<dbReference type="NCBIfam" id="NF003802">
    <property type="entry name" value="PRK05388.1"/>
    <property type="match status" value="1"/>
</dbReference>
<dbReference type="PANTHER" id="PTHR23100">
    <property type="entry name" value="ARGININE BIOSYNTHESIS BIFUNCTIONAL PROTEIN ARGJ"/>
    <property type="match status" value="1"/>
</dbReference>
<dbReference type="PANTHER" id="PTHR23100:SF0">
    <property type="entry name" value="ARGININE BIOSYNTHESIS BIFUNCTIONAL PROTEIN ARGJ, MITOCHONDRIAL"/>
    <property type="match status" value="1"/>
</dbReference>
<dbReference type="Pfam" id="PF01960">
    <property type="entry name" value="ArgJ"/>
    <property type="match status" value="1"/>
</dbReference>
<dbReference type="SUPFAM" id="SSF56266">
    <property type="entry name" value="DmpA/ArgJ-like"/>
    <property type="match status" value="1"/>
</dbReference>
<sequence length="397" mass="43043">MFVPRGFSYAGVHCRIKRKRKDLGIIFSEVPCTAAGVFTTNVVKAAPVIYDMEILGKNPSGIRAITVNSGVANACTGEQGMINARRMAEKTAKELNIPVESVLVSSTGVIGVQLPMEKVESGIEEAVKNLSKDPVPFAEAIMTTDTKIKIHSKKVTIEGKEITVLGIAKGSGMIHPNMATMLSFITTDANVSEDALKKLLKISVDDSYNMIDVDGDTSTNDMVIILANGLAGNAPIQEETDGFWKLYEAVHEVNQVLAEKIVEDGEGATKVIEVEVRNAPDRNSARLIARAIVSSNLVKTAIYGEDANWGRVIAAAGYSGAQFDPDRLDLFFESAAGRIKVAENGQGVDFDEDTAKKILSEKKVKIILDMKQGKELARAWGCDLTEKYVEINGRYRT</sequence>
<name>ARGJ_THENN</name>
<feature type="chain" id="PRO_0000002259" description="Arginine biosynthesis bifunctional protein ArgJ alpha chain" evidence="1">
    <location>
        <begin position="1"/>
        <end position="179"/>
    </location>
</feature>
<feature type="chain" id="PRO_0000002260" description="Arginine biosynthesis bifunctional protein ArgJ beta chain" evidence="1">
    <location>
        <begin position="180"/>
        <end position="397"/>
    </location>
</feature>
<feature type="active site" description="Nucleophile" evidence="1">
    <location>
        <position position="180"/>
    </location>
</feature>
<feature type="binding site" evidence="1">
    <location>
        <position position="143"/>
    </location>
    <ligand>
        <name>substrate</name>
    </ligand>
</feature>
<feature type="binding site" evidence="1">
    <location>
        <position position="169"/>
    </location>
    <ligand>
        <name>substrate</name>
    </ligand>
</feature>
<feature type="binding site" evidence="1">
    <location>
        <position position="180"/>
    </location>
    <ligand>
        <name>substrate</name>
    </ligand>
</feature>
<feature type="binding site" evidence="1">
    <location>
        <position position="266"/>
    </location>
    <ligand>
        <name>substrate</name>
    </ligand>
</feature>
<feature type="binding site" evidence="1">
    <location>
        <position position="392"/>
    </location>
    <ligand>
        <name>substrate</name>
    </ligand>
</feature>
<feature type="binding site" evidence="1">
    <location>
        <position position="397"/>
    </location>
    <ligand>
        <name>substrate</name>
    </ligand>
</feature>
<feature type="site" description="Involved in the stabilization of negative charge on the oxyanion by the formation of the oxyanion hole" evidence="1">
    <location>
        <position position="107"/>
    </location>
</feature>
<feature type="site" description="Involved in the stabilization of negative charge on the oxyanion by the formation of the oxyanion hole" evidence="1">
    <location>
        <position position="108"/>
    </location>
</feature>
<feature type="site" description="Cleavage; by autolysis" evidence="1">
    <location>
        <begin position="179"/>
        <end position="180"/>
    </location>
</feature>
<feature type="sequence conflict" description="In Ref. 1; CAB38110." evidence="4" ref="1">
    <original>S</original>
    <variation>F</variation>
    <location>
        <position position="105"/>
    </location>
</feature>
<feature type="sequence conflict" description="In Ref. 1; CAB38110." evidence="4" ref="1">
    <original>T</original>
    <variation>P</variation>
    <location>
        <position position="300"/>
    </location>
</feature>
<feature type="sequence conflict" description="In Ref. 1; CAB38110." evidence="4" ref="1">
    <original>K</original>
    <variation>R</variation>
    <location>
        <position position="363"/>
    </location>
</feature>
<organism>
    <name type="scientific">Thermotoga neapolitana (strain ATCC 49049 / DSM 4359 / NBRC 107923 / NS-E)</name>
    <dbReference type="NCBI Taxonomy" id="309803"/>
    <lineage>
        <taxon>Bacteria</taxon>
        <taxon>Thermotogati</taxon>
        <taxon>Thermotogota</taxon>
        <taxon>Thermotogae</taxon>
        <taxon>Thermotogales</taxon>
        <taxon>Thermotogaceae</taxon>
        <taxon>Thermotoga</taxon>
    </lineage>
</organism>
<protein>
    <recommendedName>
        <fullName evidence="1">Arginine biosynthesis bifunctional protein ArgJ</fullName>
    </recommendedName>
    <domain>
        <recommendedName>
            <fullName evidence="1">Glutamate N-acetyltransferase</fullName>
            <ecNumber evidence="1 2">2.3.1.35</ecNumber>
        </recommendedName>
        <alternativeName>
            <fullName evidence="1">Ornithine acetyltransferase</fullName>
            <shortName evidence="1 3">OATase</shortName>
        </alternativeName>
        <alternativeName>
            <fullName evidence="1">Ornithine transacetylase</fullName>
        </alternativeName>
    </domain>
    <domain>
        <recommendedName>
            <fullName evidence="1">Amino-acid acetyltransferase</fullName>
            <ecNumber evidence="1 2">2.3.1.1</ecNumber>
        </recommendedName>
        <alternativeName>
            <fullName evidence="1">N-acetylglutamate synthase</fullName>
            <shortName evidence="1 3">AGSase</shortName>
        </alternativeName>
    </domain>
    <component>
        <recommendedName>
            <fullName evidence="1">Arginine biosynthesis bifunctional protein ArgJ alpha chain</fullName>
        </recommendedName>
    </component>
    <component>
        <recommendedName>
            <fullName evidence="1">Arginine biosynthesis bifunctional protein ArgJ beta chain</fullName>
        </recommendedName>
    </component>
</protein>
<reference key="1">
    <citation type="journal article" date="2000" name="Mol. Gen. Genet.">
        <title>Thermostability, oligomerization and DNA-binding properties of the regulatory protein ArgR from the hyperthermophilic bacterium Thermotoga neapolitana.</title>
        <authorList>
            <person name="Dimova D."/>
            <person name="Weigel P."/>
            <person name="Takahashi M."/>
            <person name="Marc F."/>
            <person name="Van Duyne G.D."/>
            <person name="Sakanyan V."/>
        </authorList>
    </citation>
    <scope>NUCLEOTIDE SEQUENCE [GENOMIC DNA]</scope>
</reference>
<reference key="2">
    <citation type="submission" date="2007-11" db="EMBL/GenBank/DDBJ databases">
        <title>The genome sequence of the hyperthermophilic bacterium Thermotoga neapolitana.</title>
        <authorList>
            <person name="Lim S.K."/>
            <person name="Kim J.S."/>
            <person name="Cha S.H."/>
            <person name="Park B.C."/>
            <person name="Lee D.S."/>
            <person name="Tae H.S."/>
            <person name="Kim S.-J."/>
            <person name="Kim J.J."/>
            <person name="Park K.J."/>
            <person name="Lee S.Y."/>
        </authorList>
    </citation>
    <scope>NUCLEOTIDE SEQUENCE [LARGE SCALE GENOMIC DNA]</scope>
    <source>
        <strain>ATCC 49049 / DSM 4359 / NBRC 107923 / NS-E</strain>
    </source>
</reference>
<reference key="3">
    <citation type="journal article" date="2000" name="Eur. J. Biochem.">
        <title>Characterization and kinetic mechanism of mono- and bifunctional ornithine acetyltransferases from thermophilic microorganisms.</title>
        <authorList>
            <person name="Marc F."/>
            <person name="Weigel P."/>
            <person name="Legrain C."/>
            <person name="Almeras Y."/>
            <person name="Santrot M."/>
            <person name="Glansdorff N."/>
            <person name="Sakanyan V."/>
        </authorList>
    </citation>
    <scope>PROTEIN SEQUENCE OF 180-187</scope>
    <scope>FUNCTION AS AN OATASE AND AGSASE</scope>
    <scope>BIOPHYSICOCHEMICAL PROPERTIES</scope>
    <scope>CATALYTIC ACTIVITY</scope>
    <scope>ACTIVITY REGULATION</scope>
    <scope>REACTION MECHANISM</scope>
    <scope>SUBUNIT</scope>
    <source>
        <strain>NCIMB 8224 / CCM 2186 / VKM B-718</strain>
    </source>
</reference>
<evidence type="ECO:0000255" key="1">
    <source>
        <dbReference type="HAMAP-Rule" id="MF_01106"/>
    </source>
</evidence>
<evidence type="ECO:0000269" key="2">
    <source>
    </source>
</evidence>
<evidence type="ECO:0000303" key="3">
    <source>
    </source>
</evidence>
<evidence type="ECO:0000305" key="4"/>